<protein>
    <recommendedName>
        <fullName>RNA polymerase sigma-54 factor</fullName>
    </recommendedName>
</protein>
<dbReference type="EMBL" id="CP000438">
    <property type="protein sequence ID" value="ABJ13730.1"/>
    <property type="molecule type" value="Genomic_DNA"/>
</dbReference>
<dbReference type="RefSeq" id="WP_003094357.1">
    <property type="nucleotide sequence ID" value="NZ_CP034244.1"/>
</dbReference>
<dbReference type="SMR" id="A0A0H2ZGR9"/>
<dbReference type="KEGG" id="pau:PA14_57940"/>
<dbReference type="HOGENOM" id="CLU_020569_0_1_6"/>
<dbReference type="BioCyc" id="PAER208963:G1G74-4880-MONOMER"/>
<dbReference type="Proteomes" id="UP000000653">
    <property type="component" value="Chromosome"/>
</dbReference>
<dbReference type="GO" id="GO:0000428">
    <property type="term" value="C:DNA-directed RNA polymerase complex"/>
    <property type="evidence" value="ECO:0007669"/>
    <property type="project" value="UniProtKB-KW"/>
</dbReference>
<dbReference type="GO" id="GO:0003677">
    <property type="term" value="F:DNA binding"/>
    <property type="evidence" value="ECO:0007669"/>
    <property type="project" value="UniProtKB-KW"/>
</dbReference>
<dbReference type="GO" id="GO:0001216">
    <property type="term" value="F:DNA-binding transcription activator activity"/>
    <property type="evidence" value="ECO:0007669"/>
    <property type="project" value="InterPro"/>
</dbReference>
<dbReference type="GO" id="GO:0016779">
    <property type="term" value="F:nucleotidyltransferase activity"/>
    <property type="evidence" value="ECO:0007669"/>
    <property type="project" value="UniProtKB-KW"/>
</dbReference>
<dbReference type="GO" id="GO:0016987">
    <property type="term" value="F:sigma factor activity"/>
    <property type="evidence" value="ECO:0007669"/>
    <property type="project" value="UniProtKB-KW"/>
</dbReference>
<dbReference type="GO" id="GO:0006352">
    <property type="term" value="P:DNA-templated transcription initiation"/>
    <property type="evidence" value="ECO:0007669"/>
    <property type="project" value="InterPro"/>
</dbReference>
<dbReference type="FunFam" id="1.10.10.1330:FF:000001">
    <property type="entry name" value="RNA polymerase sigma-54 factor"/>
    <property type="match status" value="1"/>
</dbReference>
<dbReference type="FunFam" id="1.10.10.60:FF:000045">
    <property type="entry name" value="RNA polymerase sigma-54 factor"/>
    <property type="match status" value="1"/>
</dbReference>
<dbReference type="Gene3D" id="1.10.10.60">
    <property type="entry name" value="Homeodomain-like"/>
    <property type="match status" value="1"/>
</dbReference>
<dbReference type="Gene3D" id="1.10.10.1330">
    <property type="entry name" value="RNA polymerase sigma-54 factor, core-binding domain"/>
    <property type="match status" value="1"/>
</dbReference>
<dbReference type="InterPro" id="IPR000394">
    <property type="entry name" value="RNA_pol_sigma_54"/>
</dbReference>
<dbReference type="InterPro" id="IPR007046">
    <property type="entry name" value="RNA_pol_sigma_54_core-bd"/>
</dbReference>
<dbReference type="InterPro" id="IPR007634">
    <property type="entry name" value="RNA_pol_sigma_54_DNA-bd"/>
</dbReference>
<dbReference type="InterPro" id="IPR038709">
    <property type="entry name" value="RpoN_core-bd_sf"/>
</dbReference>
<dbReference type="NCBIfam" id="NF004595">
    <property type="entry name" value="PRK05932.1-2"/>
    <property type="match status" value="1"/>
</dbReference>
<dbReference type="NCBIfam" id="NF009118">
    <property type="entry name" value="PRK12469.1"/>
    <property type="match status" value="1"/>
</dbReference>
<dbReference type="NCBIfam" id="TIGR02395">
    <property type="entry name" value="rpoN_sigma"/>
    <property type="match status" value="1"/>
</dbReference>
<dbReference type="PANTHER" id="PTHR32248">
    <property type="entry name" value="RNA POLYMERASE SIGMA-54 FACTOR"/>
    <property type="match status" value="1"/>
</dbReference>
<dbReference type="PANTHER" id="PTHR32248:SF4">
    <property type="entry name" value="RNA POLYMERASE SIGMA-54 FACTOR"/>
    <property type="match status" value="1"/>
</dbReference>
<dbReference type="Pfam" id="PF00309">
    <property type="entry name" value="Sigma54_AID"/>
    <property type="match status" value="1"/>
</dbReference>
<dbReference type="Pfam" id="PF04963">
    <property type="entry name" value="Sigma54_CBD"/>
    <property type="match status" value="1"/>
</dbReference>
<dbReference type="Pfam" id="PF04552">
    <property type="entry name" value="Sigma54_DBD"/>
    <property type="match status" value="1"/>
</dbReference>
<dbReference type="PIRSF" id="PIRSF000774">
    <property type="entry name" value="RpoN"/>
    <property type="match status" value="1"/>
</dbReference>
<dbReference type="PRINTS" id="PR00045">
    <property type="entry name" value="SIGMA54FCT"/>
</dbReference>
<dbReference type="PROSITE" id="PS00717">
    <property type="entry name" value="SIGMA54_1"/>
    <property type="match status" value="1"/>
</dbReference>
<dbReference type="PROSITE" id="PS00718">
    <property type="entry name" value="SIGMA54_2"/>
    <property type="match status" value="1"/>
</dbReference>
<dbReference type="PROSITE" id="PS50044">
    <property type="entry name" value="SIGMA54_3"/>
    <property type="match status" value="1"/>
</dbReference>
<reference key="1">
    <citation type="journal article" date="2006" name="Genome Biol.">
        <title>Genomic analysis reveals that Pseudomonas aeruginosa virulence is combinatorial.</title>
        <authorList>
            <person name="Lee D.G."/>
            <person name="Urbach J.M."/>
            <person name="Wu G."/>
            <person name="Liberati N.T."/>
            <person name="Feinbaum R.L."/>
            <person name="Miyata S."/>
            <person name="Diggins L.T."/>
            <person name="He J."/>
            <person name="Saucier M."/>
            <person name="Deziel E."/>
            <person name="Friedman L."/>
            <person name="Li L."/>
            <person name="Grills G."/>
            <person name="Montgomery K."/>
            <person name="Kucherlapati R."/>
            <person name="Rahme L.G."/>
            <person name="Ausubel F.M."/>
        </authorList>
    </citation>
    <scope>NUCLEOTIDE SEQUENCE [LARGE SCALE GENOMIC DNA]</scope>
    <source>
        <strain>UCBPP-PA14</strain>
    </source>
</reference>
<reference key="2">
    <citation type="journal article" date="2001" name="J. Bacteriol.">
        <title>Differential roles of the Pseudomonas aeruginosa PA14 rpoN gene in pathogenicity in plants, nematodes, insects, and mice.</title>
        <authorList>
            <person name="Hendrickson E.L."/>
            <person name="Plotnikova J."/>
            <person name="Mahajan-Miklos S."/>
            <person name="Rahme L.G."/>
            <person name="Ausubel F.M."/>
        </authorList>
    </citation>
    <scope>FUNCTION</scope>
    <scope>DISRUPTION PHENOTYPE</scope>
</reference>
<proteinExistence type="inferred from homology"/>
<organism>
    <name type="scientific">Pseudomonas aeruginosa (strain UCBPP-PA14)</name>
    <dbReference type="NCBI Taxonomy" id="208963"/>
    <lineage>
        <taxon>Bacteria</taxon>
        <taxon>Pseudomonadati</taxon>
        <taxon>Pseudomonadota</taxon>
        <taxon>Gammaproteobacteria</taxon>
        <taxon>Pseudomonadales</taxon>
        <taxon>Pseudomonadaceae</taxon>
        <taxon>Pseudomonas</taxon>
    </lineage>
</organism>
<comment type="function">
    <text evidence="1 4">Sigma factors are initiation factors that promote the attachment of RNA polymerase to specific initiation sites and are then released. Plays a role in the regulation of many virulence factors, motility, quorum sensing, mucoidy, a general mechanism for maintaining lytic phage in populations of bacteria, and biofilm formation. Positively controls the T6 secretion system by directly binding to the promoter regions of hcpA and hcpB, leading to their expression (By similarity). Thereby, allows to colonize several hosts efficiently including mammals, insects, nematodes and plants (PubMed:11717271).</text>
</comment>
<comment type="disruption phenotype">
    <text evidence="4">Mutants exhibit reduced pathogenicity in mice, C. elegans as well as Arabiposis.</text>
</comment>
<comment type="similarity">
    <text evidence="5">Belongs to the sigma-54 factor family.</text>
</comment>
<gene>
    <name type="primary">rpoN</name>
    <name type="ordered locus">PA14_57940</name>
</gene>
<sequence length="497" mass="56054">MKPSLVLKMGQQLTMTPQLQQAIRLLQLSTLDLQQEIQEALESNPMLERQEDGDDFDNSDPLADGAEQAASAPQESPLQESATPSVESLDDDQWSERIPSELPVDTAWEDIYQTSASSLPSNDDDEWDFTARTSSGESLHSHLLWQVNLAPMSDTDRMIAVTIIDSINNDGYLEESLEEILAAIDPELDVELDEVEVVLRRIQQLEPAGIGARNLRECLLLQLRQLPSTTPWLNEALRLVSDYLDLLGGRDYSQLMRRMKLKEDELRQVIELIQCLHPRPGSQIESSEAEYIVPDVIVRKDNERWLVELNQEAMPRLRVNATYAGMVRRADSSADNTFMRNQLQEARWFIKSLQSRNETLMKVATQIVEHQRGFLDYGEEAMKPLVLHDIAEAVGMHESTISRVTTQKYMHTPRGIFELKYFFSSHVSTAEGGECSSTAIRAIIKKLVAAENAKKPLSDSKIAGLLEAQGIQVARRTVAKYRESLGIAPSSERKRLV</sequence>
<keyword id="KW-0238">DNA-binding</keyword>
<keyword id="KW-0240">DNA-directed RNA polymerase</keyword>
<keyword id="KW-0548">Nucleotidyltransferase</keyword>
<keyword id="KW-0731">Sigma factor</keyword>
<keyword id="KW-0804">Transcription</keyword>
<keyword id="KW-0805">Transcription regulation</keyword>
<keyword id="KW-0808">Transferase</keyword>
<feature type="chain" id="PRO_0000450718" description="RNA polymerase sigma-54 factor">
    <location>
        <begin position="1"/>
        <end position="497"/>
    </location>
</feature>
<feature type="DNA-binding region" description="H-T-H motif" evidence="2">
    <location>
        <begin position="386"/>
        <end position="405"/>
    </location>
</feature>
<feature type="region of interest" description="Disordered" evidence="3">
    <location>
        <begin position="42"/>
        <end position="100"/>
    </location>
</feature>
<feature type="short sequence motif" description="RPON box" evidence="1">
    <location>
        <begin position="474"/>
        <end position="482"/>
    </location>
</feature>
<feature type="compositionally biased region" description="Polar residues" evidence="3">
    <location>
        <begin position="71"/>
        <end position="86"/>
    </location>
</feature>
<name>RP54_PSEAB</name>
<evidence type="ECO:0000250" key="1">
    <source>
        <dbReference type="UniProtKB" id="P49988"/>
    </source>
</evidence>
<evidence type="ECO:0000255" key="2"/>
<evidence type="ECO:0000256" key="3">
    <source>
        <dbReference type="SAM" id="MobiDB-lite"/>
    </source>
</evidence>
<evidence type="ECO:0000269" key="4">
    <source>
    </source>
</evidence>
<evidence type="ECO:0000305" key="5"/>
<accession>A0A0H2ZGR9</accession>